<name>GLGA2_BRADU</name>
<reference key="1">
    <citation type="journal article" date="2002" name="DNA Res.">
        <title>Complete genomic sequence of nitrogen-fixing symbiotic bacterium Bradyrhizobium japonicum USDA110.</title>
        <authorList>
            <person name="Kaneko T."/>
            <person name="Nakamura Y."/>
            <person name="Sato S."/>
            <person name="Minamisawa K."/>
            <person name="Uchiumi T."/>
            <person name="Sasamoto S."/>
            <person name="Watanabe A."/>
            <person name="Idesawa K."/>
            <person name="Iriguchi M."/>
            <person name="Kawashima K."/>
            <person name="Kohara M."/>
            <person name="Matsumoto M."/>
            <person name="Shimpo S."/>
            <person name="Tsuruoka H."/>
            <person name="Wada T."/>
            <person name="Yamada M."/>
            <person name="Tabata S."/>
        </authorList>
    </citation>
    <scope>NUCLEOTIDE SEQUENCE [LARGE SCALE GENOMIC DNA]</scope>
    <source>
        <strain>JCM 10833 / BCRC 13528 / IAM 13628 / NBRC 14792 / USDA 110</strain>
    </source>
</reference>
<organism>
    <name type="scientific">Bradyrhizobium diazoefficiens (strain JCM 10833 / BCRC 13528 / IAM 13628 / NBRC 14792 / USDA 110)</name>
    <dbReference type="NCBI Taxonomy" id="224911"/>
    <lineage>
        <taxon>Bacteria</taxon>
        <taxon>Pseudomonadati</taxon>
        <taxon>Pseudomonadota</taxon>
        <taxon>Alphaproteobacteria</taxon>
        <taxon>Hyphomicrobiales</taxon>
        <taxon>Nitrobacteraceae</taxon>
        <taxon>Bradyrhizobium</taxon>
    </lineage>
</organism>
<protein>
    <recommendedName>
        <fullName evidence="1">Glycogen synthase 2</fullName>
        <ecNumber evidence="1">2.4.1.21</ecNumber>
    </recommendedName>
    <alternativeName>
        <fullName evidence="1">Starch [bacterial glycogen] synthase 2</fullName>
    </alternativeName>
</protein>
<gene>
    <name evidence="1" type="primary">glgA2</name>
    <name type="ordered locus">blr6459</name>
</gene>
<dbReference type="EC" id="2.4.1.21" evidence="1"/>
<dbReference type="EMBL" id="BA000040">
    <property type="protein sequence ID" value="BAC51724.1"/>
    <property type="molecule type" value="Genomic_DNA"/>
</dbReference>
<dbReference type="RefSeq" id="NP_773099.1">
    <property type="nucleotide sequence ID" value="NC_004463.1"/>
</dbReference>
<dbReference type="RefSeq" id="WP_011089199.1">
    <property type="nucleotide sequence ID" value="NC_004463.1"/>
</dbReference>
<dbReference type="SMR" id="Q89G86"/>
<dbReference type="FunCoup" id="Q89G86">
    <property type="interactions" value="318"/>
</dbReference>
<dbReference type="STRING" id="224911.AAV28_29850"/>
<dbReference type="CAZy" id="GT5">
    <property type="family name" value="Glycosyltransferase Family 5"/>
</dbReference>
<dbReference type="EnsemblBacteria" id="BAC51724">
    <property type="protein sequence ID" value="BAC51724"/>
    <property type="gene ID" value="BAC51724"/>
</dbReference>
<dbReference type="GeneID" id="46493432"/>
<dbReference type="KEGG" id="bja:blr6459"/>
<dbReference type="PATRIC" id="fig|224911.44.peg.6449"/>
<dbReference type="eggNOG" id="COG0297">
    <property type="taxonomic scope" value="Bacteria"/>
</dbReference>
<dbReference type="HOGENOM" id="CLU_009583_18_2_5"/>
<dbReference type="InParanoid" id="Q89G86"/>
<dbReference type="OrthoDB" id="9808590at2"/>
<dbReference type="PhylomeDB" id="Q89G86"/>
<dbReference type="UniPathway" id="UPA00164"/>
<dbReference type="Proteomes" id="UP000002526">
    <property type="component" value="Chromosome"/>
</dbReference>
<dbReference type="GO" id="GO:0005829">
    <property type="term" value="C:cytosol"/>
    <property type="evidence" value="ECO:0000318"/>
    <property type="project" value="GO_Central"/>
</dbReference>
<dbReference type="GO" id="GO:0009011">
    <property type="term" value="F:alpha-1,4-glucan glucosyltransferase (ADP-glucose donor) activity"/>
    <property type="evidence" value="ECO:0007669"/>
    <property type="project" value="UniProtKB-UniRule"/>
</dbReference>
<dbReference type="GO" id="GO:0004373">
    <property type="term" value="F:alpha-1,4-glucan glucosyltransferase (UDP-glucose donor) activity"/>
    <property type="evidence" value="ECO:0007669"/>
    <property type="project" value="InterPro"/>
</dbReference>
<dbReference type="GO" id="GO:0005978">
    <property type="term" value="P:glycogen biosynthetic process"/>
    <property type="evidence" value="ECO:0000318"/>
    <property type="project" value="GO_Central"/>
</dbReference>
<dbReference type="CDD" id="cd03791">
    <property type="entry name" value="GT5_Glycogen_synthase_DULL1-like"/>
    <property type="match status" value="1"/>
</dbReference>
<dbReference type="FunFam" id="3.40.50.2000:FF:000011">
    <property type="entry name" value="Glycogen synthase"/>
    <property type="match status" value="1"/>
</dbReference>
<dbReference type="Gene3D" id="3.40.50.2000">
    <property type="entry name" value="Glycogen Phosphorylase B"/>
    <property type="match status" value="2"/>
</dbReference>
<dbReference type="HAMAP" id="MF_00484">
    <property type="entry name" value="Glycogen_synth"/>
    <property type="match status" value="1"/>
</dbReference>
<dbReference type="InterPro" id="IPR001296">
    <property type="entry name" value="Glyco_trans_1"/>
</dbReference>
<dbReference type="InterPro" id="IPR011835">
    <property type="entry name" value="GS/SS"/>
</dbReference>
<dbReference type="InterPro" id="IPR013534">
    <property type="entry name" value="Starch_synth_cat_dom"/>
</dbReference>
<dbReference type="NCBIfam" id="TIGR02095">
    <property type="entry name" value="glgA"/>
    <property type="match status" value="1"/>
</dbReference>
<dbReference type="NCBIfam" id="NF001899">
    <property type="entry name" value="PRK00654.1-2"/>
    <property type="match status" value="1"/>
</dbReference>
<dbReference type="NCBIfam" id="NF010699">
    <property type="entry name" value="PRK14099.1"/>
    <property type="match status" value="1"/>
</dbReference>
<dbReference type="PANTHER" id="PTHR45825:SF11">
    <property type="entry name" value="ALPHA AMYLASE DOMAIN-CONTAINING PROTEIN"/>
    <property type="match status" value="1"/>
</dbReference>
<dbReference type="PANTHER" id="PTHR45825">
    <property type="entry name" value="GRANULE-BOUND STARCH SYNTHASE 1, CHLOROPLASTIC/AMYLOPLASTIC"/>
    <property type="match status" value="1"/>
</dbReference>
<dbReference type="Pfam" id="PF08323">
    <property type="entry name" value="Glyco_transf_5"/>
    <property type="match status" value="1"/>
</dbReference>
<dbReference type="Pfam" id="PF00534">
    <property type="entry name" value="Glycos_transf_1"/>
    <property type="match status" value="1"/>
</dbReference>
<dbReference type="SUPFAM" id="SSF53756">
    <property type="entry name" value="UDP-Glycosyltransferase/glycogen phosphorylase"/>
    <property type="match status" value="1"/>
</dbReference>
<comment type="function">
    <text evidence="1">Synthesizes alpha-1,4-glucan chains using ADP-glucose.</text>
</comment>
<comment type="catalytic activity">
    <reaction evidence="1">
        <text>[(1-&gt;4)-alpha-D-glucosyl](n) + ADP-alpha-D-glucose = [(1-&gt;4)-alpha-D-glucosyl](n+1) + ADP + H(+)</text>
        <dbReference type="Rhea" id="RHEA:18189"/>
        <dbReference type="Rhea" id="RHEA-COMP:9584"/>
        <dbReference type="Rhea" id="RHEA-COMP:9587"/>
        <dbReference type="ChEBI" id="CHEBI:15378"/>
        <dbReference type="ChEBI" id="CHEBI:15444"/>
        <dbReference type="ChEBI" id="CHEBI:57498"/>
        <dbReference type="ChEBI" id="CHEBI:456216"/>
        <dbReference type="EC" id="2.4.1.21"/>
    </reaction>
</comment>
<comment type="pathway">
    <text evidence="1">Glycan biosynthesis; glycogen biosynthesis.</text>
</comment>
<comment type="similarity">
    <text evidence="1">Belongs to the glycosyltransferase 1 family. Bacterial/plant glycogen synthase subfamily.</text>
</comment>
<evidence type="ECO:0000255" key="1">
    <source>
        <dbReference type="HAMAP-Rule" id="MF_00484"/>
    </source>
</evidence>
<keyword id="KW-0320">Glycogen biosynthesis</keyword>
<keyword id="KW-0328">Glycosyltransferase</keyword>
<keyword id="KW-1185">Reference proteome</keyword>
<keyword id="KW-0808">Transferase</keyword>
<feature type="chain" id="PRO_0000188601" description="Glycogen synthase 2">
    <location>
        <begin position="1"/>
        <end position="482"/>
    </location>
</feature>
<feature type="binding site" evidence="1">
    <location>
        <position position="18"/>
    </location>
    <ligand>
        <name>ADP-alpha-D-glucose</name>
        <dbReference type="ChEBI" id="CHEBI:57498"/>
    </ligand>
</feature>
<accession>Q89G86</accession>
<sequence length="482" mass="51786">MTPARVLAVASEVYPIVKTGGLADVAGALPIALKAHGVEMRTLMPGYPDVMRLLSGAEEIRRWPDYFGGPGRLLAGAHDGLDLFVLDVPHLYARPGNPYVTTEGVDWPDNGVRFAALSRVAADIGHGLVPAFVPDIVHAHDWQAGLAPAYLHYDNRPRPGTVMTIHNMAYQGKFAPELIGAIGLPWSSFDVNGLEYFGGISFLKAGLQFADRITTVSPTYAREIQSDEGGMGLGGLLRARAGALSGILNGIDIAVWNPQTDSHIAYRFGAEDLTFRAANKAVLQQQFNLDSSDEAPLLGVISRLSWQKGLDLLLEAIPTILGEGMQLALLGSGDRDLQDRYQAAARANPGRIGVVIGYDEILAHLIQAGSDALIVPSRFEPCGLTQLCALRYGAVPIVSRVGGLEDTIVDIGEAGREATGFKFGPVTADALAGTLRKANTAFHDKLTWRQLQRNGLATDVSWRSRAGDYAALYRSLIESRRA</sequence>
<proteinExistence type="inferred from homology"/>